<keyword id="KW-0012">Acyltransferase</keyword>
<keyword id="KW-0963">Cytoplasm</keyword>
<keyword id="KW-0808">Transferase</keyword>
<feature type="chain" id="PRO_0000074590" description="Diamine acetyltransferase 1">
    <location>
        <begin position="1"/>
        <end position="171"/>
    </location>
</feature>
<feature type="domain" description="N-acetyltransferase" evidence="3">
    <location>
        <begin position="4"/>
        <end position="170"/>
    </location>
</feature>
<feature type="active site" description="Proton donor" evidence="1">
    <location>
        <position position="140"/>
    </location>
</feature>
<feature type="binding site" evidence="2">
    <location>
        <begin position="27"/>
        <end position="28"/>
    </location>
    <ligand>
        <name>substrate</name>
    </ligand>
</feature>
<feature type="binding site" evidence="2">
    <location>
        <position position="92"/>
    </location>
    <ligand>
        <name>substrate</name>
    </ligand>
</feature>
<feature type="binding site" evidence="2">
    <location>
        <begin position="94"/>
        <end position="96"/>
    </location>
    <ligand>
        <name>acetyl-CoA</name>
        <dbReference type="ChEBI" id="CHEBI:57288"/>
    </ligand>
</feature>
<feature type="binding site" evidence="2">
    <location>
        <begin position="102"/>
        <end position="107"/>
    </location>
    <ligand>
        <name>acetyl-CoA</name>
        <dbReference type="ChEBI" id="CHEBI:57288"/>
    </ligand>
</feature>
<feature type="binding site" evidence="2">
    <location>
        <begin position="126"/>
        <end position="128"/>
    </location>
    <ligand>
        <name>substrate</name>
    </ligand>
</feature>
<feature type="binding site" evidence="2">
    <location>
        <begin position="133"/>
        <end position="136"/>
    </location>
    <ligand>
        <name>acetyl-CoA</name>
        <dbReference type="ChEBI" id="CHEBI:57288"/>
    </ligand>
</feature>
<feature type="binding site" evidence="2">
    <location>
        <begin position="140"/>
        <end position="143"/>
    </location>
    <ligand>
        <name>acetyl-CoA</name>
        <dbReference type="ChEBI" id="CHEBI:57288"/>
    </ligand>
</feature>
<feature type="binding site" evidence="2">
    <location>
        <position position="152"/>
    </location>
    <ligand>
        <name>substrate</name>
    </ligand>
</feature>
<feature type="sequence variant" description="In N(1),N(12)-bis(ethyl)spermine-resistant cell line C55.7Res." evidence="4">
    <original>L</original>
    <variation>F</variation>
    <location>
        <position position="156"/>
    </location>
</feature>
<name>SAT1_CRIGR</name>
<accession>Q9JHW6</accession>
<gene>
    <name evidence="2" type="primary">SAT1</name>
    <name type="synonym">SAT</name>
</gene>
<evidence type="ECO:0000250" key="1">
    <source>
        <dbReference type="UniProtKB" id="P0A951"/>
    </source>
</evidence>
<evidence type="ECO:0000250" key="2">
    <source>
        <dbReference type="UniProtKB" id="P21673"/>
    </source>
</evidence>
<evidence type="ECO:0000255" key="3">
    <source>
        <dbReference type="PROSITE-ProRule" id="PRU00532"/>
    </source>
</evidence>
<evidence type="ECO:0000269" key="4">
    <source>
    </source>
</evidence>
<evidence type="ECO:0000303" key="5">
    <source>
    </source>
</evidence>
<evidence type="ECO:0000305" key="6"/>
<proteinExistence type="evidence at transcript level"/>
<organism>
    <name type="scientific">Cricetulus griseus</name>
    <name type="common">Chinese hamster</name>
    <name type="synonym">Cricetulus barabensis griseus</name>
    <dbReference type="NCBI Taxonomy" id="10029"/>
    <lineage>
        <taxon>Eukaryota</taxon>
        <taxon>Metazoa</taxon>
        <taxon>Chordata</taxon>
        <taxon>Craniata</taxon>
        <taxon>Vertebrata</taxon>
        <taxon>Euteleostomi</taxon>
        <taxon>Mammalia</taxon>
        <taxon>Eutheria</taxon>
        <taxon>Euarchontoglires</taxon>
        <taxon>Glires</taxon>
        <taxon>Rodentia</taxon>
        <taxon>Myomorpha</taxon>
        <taxon>Muroidea</taxon>
        <taxon>Cricetidae</taxon>
        <taxon>Cricetinae</taxon>
        <taxon>Cricetulus</taxon>
    </lineage>
</organism>
<protein>
    <recommendedName>
        <fullName>Diamine acetyltransferase 1</fullName>
        <ecNumber evidence="2">2.3.1.57</ecNumber>
    </recommendedName>
    <alternativeName>
        <fullName>Polyamine N-acetyltransferase 1</fullName>
    </alternativeName>
    <alternativeName>
        <fullName>Putrescine acetyltransferase</fullName>
    </alternativeName>
    <alternativeName>
        <fullName evidence="5">Spermidine/spermine N(1)-acetyltransferase 1</fullName>
        <shortName evidence="5">SSAT</shortName>
        <shortName>SSAT-1</shortName>
    </alternativeName>
</protein>
<reference key="1">
    <citation type="journal article" date="2000" name="J. Biol. Chem.">
        <title>Altered spermidine/spermine N1-acetyltransferase activity as a mechanism of cellular resistance to bis(ethyl)polyamine analogues.</title>
        <authorList>
            <person name="McCloskey D.E."/>
            <person name="Pegg A.E."/>
        </authorList>
    </citation>
    <scope>NUCLEOTIDE SEQUENCE [MRNA]</scope>
    <scope>VARIANT PHE-156</scope>
    <source>
        <tissue>Ovarian carcinoma</tissue>
    </source>
</reference>
<dbReference type="EC" id="2.3.1.57" evidence="2"/>
<dbReference type="EMBL" id="AF281149">
    <property type="protein sequence ID" value="AAF86286.1"/>
    <property type="molecule type" value="mRNA"/>
</dbReference>
<dbReference type="RefSeq" id="NP_001233618.1">
    <property type="nucleotide sequence ID" value="NM_001246689.1"/>
</dbReference>
<dbReference type="SMR" id="Q9JHW6"/>
<dbReference type="PaxDb" id="10029-NP_001233618.1"/>
<dbReference type="Ensembl" id="ENSCGRT00001028331.1">
    <property type="protein sequence ID" value="ENSCGRP00001024085.1"/>
    <property type="gene ID" value="ENSCGRG00001022103.1"/>
</dbReference>
<dbReference type="GeneID" id="100689427"/>
<dbReference type="KEGG" id="cge:100689427"/>
<dbReference type="CTD" id="6303"/>
<dbReference type="eggNOG" id="KOG3216">
    <property type="taxonomic scope" value="Eukaryota"/>
</dbReference>
<dbReference type="GeneTree" id="ENSGT00950000183121"/>
<dbReference type="OrthoDB" id="7305308at2759"/>
<dbReference type="UniPathway" id="UPA00188">
    <property type="reaction ID" value="UER00363"/>
</dbReference>
<dbReference type="Proteomes" id="UP000694386">
    <property type="component" value="Unplaced"/>
</dbReference>
<dbReference type="Proteomes" id="UP001108280">
    <property type="component" value="Chromosome X"/>
</dbReference>
<dbReference type="GO" id="GO:0005829">
    <property type="term" value="C:cytosol"/>
    <property type="evidence" value="ECO:0007669"/>
    <property type="project" value="UniProtKB-SubCell"/>
</dbReference>
<dbReference type="GO" id="GO:0004145">
    <property type="term" value="F:diamine N-acetyltransferase activity"/>
    <property type="evidence" value="ECO:0000250"/>
    <property type="project" value="UniProtKB"/>
</dbReference>
<dbReference type="GO" id="GO:0042802">
    <property type="term" value="F:identical protein binding"/>
    <property type="evidence" value="ECO:0007669"/>
    <property type="project" value="Ensembl"/>
</dbReference>
<dbReference type="GO" id="GO:0008080">
    <property type="term" value="F:N-acetyltransferase activity"/>
    <property type="evidence" value="ECO:0000250"/>
    <property type="project" value="UniProtKB"/>
</dbReference>
<dbReference type="GO" id="GO:0019809">
    <property type="term" value="F:spermidine binding"/>
    <property type="evidence" value="ECO:0007669"/>
    <property type="project" value="TreeGrafter"/>
</dbReference>
<dbReference type="GO" id="GO:0001525">
    <property type="term" value="P:angiogenesis"/>
    <property type="evidence" value="ECO:0007669"/>
    <property type="project" value="Ensembl"/>
</dbReference>
<dbReference type="GO" id="GO:0006596">
    <property type="term" value="P:polyamine biosynthetic process"/>
    <property type="evidence" value="ECO:0000250"/>
    <property type="project" value="UniProtKB"/>
</dbReference>
<dbReference type="GO" id="GO:0009447">
    <property type="term" value="P:putrescine catabolic process"/>
    <property type="evidence" value="ECO:0007669"/>
    <property type="project" value="UniProtKB-UniPathway"/>
</dbReference>
<dbReference type="GO" id="GO:0042127">
    <property type="term" value="P:regulation of cell population proliferation"/>
    <property type="evidence" value="ECO:0007669"/>
    <property type="project" value="Ensembl"/>
</dbReference>
<dbReference type="GO" id="GO:0032918">
    <property type="term" value="P:spermidine acetylation"/>
    <property type="evidence" value="ECO:0000250"/>
    <property type="project" value="UniProtKB"/>
</dbReference>
<dbReference type="CDD" id="cd04301">
    <property type="entry name" value="NAT_SF"/>
    <property type="match status" value="1"/>
</dbReference>
<dbReference type="FunFam" id="3.40.630.30:FF:000011">
    <property type="entry name" value="Diamine acetyltransferase 1"/>
    <property type="match status" value="1"/>
</dbReference>
<dbReference type="Gene3D" id="3.40.630.30">
    <property type="match status" value="1"/>
</dbReference>
<dbReference type="InterPro" id="IPR016181">
    <property type="entry name" value="Acyl_CoA_acyltransferase"/>
</dbReference>
<dbReference type="InterPro" id="IPR051016">
    <property type="entry name" value="Diverse_Substrate_AcTransf"/>
</dbReference>
<dbReference type="InterPro" id="IPR000182">
    <property type="entry name" value="GNAT_dom"/>
</dbReference>
<dbReference type="PANTHER" id="PTHR10545:SF36">
    <property type="entry name" value="DIAMINE ACETYLTRANSFERASE 1"/>
    <property type="match status" value="1"/>
</dbReference>
<dbReference type="PANTHER" id="PTHR10545">
    <property type="entry name" value="DIAMINE N-ACETYLTRANSFERASE"/>
    <property type="match status" value="1"/>
</dbReference>
<dbReference type="Pfam" id="PF00583">
    <property type="entry name" value="Acetyltransf_1"/>
    <property type="match status" value="1"/>
</dbReference>
<dbReference type="SUPFAM" id="SSF55729">
    <property type="entry name" value="Acyl-CoA N-acyltransferases (Nat)"/>
    <property type="match status" value="1"/>
</dbReference>
<dbReference type="PROSITE" id="PS51186">
    <property type="entry name" value="GNAT"/>
    <property type="match status" value="1"/>
</dbReference>
<sequence>MAKFKIRPATASDCSDILRLIKELAKYEYMEDQVMLTEKDLLEDGFGEHPFYHCLIAEVPKEHWTPEGHSIVGFAMYYFTYDPWIGKLLYLEDFFVMSDYRGFGIGSEILKNLSQVAMKCRCSSMHFLVAEWNEPSINFYKRRGASDLSSEEGWRLFKIDKEYLLKMAAEE</sequence>
<comment type="function">
    <text evidence="2">Enzyme which catalyzes the acetylation of polyamines. Substrate specificity: norspermidine = spermidine &gt;&gt; spermine &gt; N(1)-acetylspermine. This highly regulated enzyme allows a fine attenuation of the intracellular concentration of polyamines. Also involved in the regulation of polyamine transport out of cells. Also acts on 1,3-diaminopropane and 1,5-diaminopentane.</text>
</comment>
<comment type="catalytic activity">
    <reaction evidence="2">
        <text>an alkane-alpha,omega-diamine + acetyl-CoA = an N-acetylalkane-alpha,omega-diamine + CoA + H(+)</text>
        <dbReference type="Rhea" id="RHEA:11116"/>
        <dbReference type="Rhea" id="RHEA-COMP:9766"/>
        <dbReference type="Rhea" id="RHEA-COMP:9767"/>
        <dbReference type="ChEBI" id="CHEBI:15378"/>
        <dbReference type="ChEBI" id="CHEBI:57287"/>
        <dbReference type="ChEBI" id="CHEBI:57288"/>
        <dbReference type="ChEBI" id="CHEBI:70977"/>
        <dbReference type="ChEBI" id="CHEBI:70988"/>
        <dbReference type="EC" id="2.3.1.57"/>
    </reaction>
    <physiologicalReaction direction="left-to-right" evidence="2">
        <dbReference type="Rhea" id="RHEA:11117"/>
    </physiologicalReaction>
</comment>
<comment type="catalytic activity">
    <reaction evidence="2">
        <text>spermidine + acetyl-CoA = N(1)-acetylspermidine + CoA + H(+)</text>
        <dbReference type="Rhea" id="RHEA:28150"/>
        <dbReference type="ChEBI" id="CHEBI:15378"/>
        <dbReference type="ChEBI" id="CHEBI:57287"/>
        <dbReference type="ChEBI" id="CHEBI:57288"/>
        <dbReference type="ChEBI" id="CHEBI:57834"/>
        <dbReference type="ChEBI" id="CHEBI:58324"/>
        <dbReference type="EC" id="2.3.1.57"/>
    </reaction>
    <physiologicalReaction direction="left-to-right" evidence="2">
        <dbReference type="Rhea" id="RHEA:28151"/>
    </physiologicalReaction>
</comment>
<comment type="catalytic activity">
    <reaction evidence="2">
        <text>spermine + acetyl-CoA = N(1)-acetylspermine + CoA + H(+)</text>
        <dbReference type="Rhea" id="RHEA:33099"/>
        <dbReference type="ChEBI" id="CHEBI:15378"/>
        <dbReference type="ChEBI" id="CHEBI:45725"/>
        <dbReference type="ChEBI" id="CHEBI:57287"/>
        <dbReference type="ChEBI" id="CHEBI:57288"/>
        <dbReference type="ChEBI" id="CHEBI:58101"/>
        <dbReference type="EC" id="2.3.1.57"/>
    </reaction>
    <physiologicalReaction direction="left-to-right" evidence="2">
        <dbReference type="Rhea" id="RHEA:33100"/>
    </physiologicalReaction>
</comment>
<comment type="pathway">
    <text evidence="2">Amine and polyamine degradation; putrescine degradation; N-acetylputrescine from putrescine: step 1/1.</text>
</comment>
<comment type="subunit">
    <text evidence="2">Homodimer.</text>
</comment>
<comment type="subcellular location">
    <subcellularLocation>
        <location evidence="2">Cytoplasm</location>
        <location evidence="2">Cytosol</location>
    </subcellularLocation>
</comment>
<comment type="similarity">
    <text evidence="6">Belongs to the acetyltransferase family.</text>
</comment>